<name>RS9_BRUAB</name>
<keyword id="KW-0687">Ribonucleoprotein</keyword>
<keyword id="KW-0689">Ribosomal protein</keyword>
<accession>Q57DW2</accession>
<proteinExistence type="inferred from homology"/>
<dbReference type="EMBL" id="AE017223">
    <property type="protein sequence ID" value="AAX74172.1"/>
    <property type="molecule type" value="Genomic_DNA"/>
</dbReference>
<dbReference type="RefSeq" id="WP_002966767.1">
    <property type="nucleotide sequence ID" value="NC_006932.1"/>
</dbReference>
<dbReference type="SMR" id="Q57DW2"/>
<dbReference type="EnsemblBacteria" id="AAX74172">
    <property type="protein sequence ID" value="AAX74172"/>
    <property type="gene ID" value="BruAb1_0804"/>
</dbReference>
<dbReference type="GeneID" id="93016821"/>
<dbReference type="KEGG" id="bmb:BruAb1_0804"/>
<dbReference type="HOGENOM" id="CLU_046483_2_0_5"/>
<dbReference type="Proteomes" id="UP000000540">
    <property type="component" value="Chromosome I"/>
</dbReference>
<dbReference type="GO" id="GO:0022627">
    <property type="term" value="C:cytosolic small ribosomal subunit"/>
    <property type="evidence" value="ECO:0007669"/>
    <property type="project" value="TreeGrafter"/>
</dbReference>
<dbReference type="GO" id="GO:0003723">
    <property type="term" value="F:RNA binding"/>
    <property type="evidence" value="ECO:0007669"/>
    <property type="project" value="TreeGrafter"/>
</dbReference>
<dbReference type="GO" id="GO:0003735">
    <property type="term" value="F:structural constituent of ribosome"/>
    <property type="evidence" value="ECO:0007669"/>
    <property type="project" value="InterPro"/>
</dbReference>
<dbReference type="GO" id="GO:0006412">
    <property type="term" value="P:translation"/>
    <property type="evidence" value="ECO:0007669"/>
    <property type="project" value="UniProtKB-UniRule"/>
</dbReference>
<dbReference type="FunFam" id="3.30.230.10:FF:000034">
    <property type="entry name" value="30S ribosomal protein S9"/>
    <property type="match status" value="1"/>
</dbReference>
<dbReference type="Gene3D" id="3.30.230.10">
    <property type="match status" value="1"/>
</dbReference>
<dbReference type="HAMAP" id="MF_00532_B">
    <property type="entry name" value="Ribosomal_uS9_B"/>
    <property type="match status" value="1"/>
</dbReference>
<dbReference type="InterPro" id="IPR020568">
    <property type="entry name" value="Ribosomal_Su5_D2-typ_SF"/>
</dbReference>
<dbReference type="InterPro" id="IPR000754">
    <property type="entry name" value="Ribosomal_uS9"/>
</dbReference>
<dbReference type="InterPro" id="IPR023035">
    <property type="entry name" value="Ribosomal_uS9_bac/plastid"/>
</dbReference>
<dbReference type="InterPro" id="IPR020574">
    <property type="entry name" value="Ribosomal_uS9_CS"/>
</dbReference>
<dbReference type="InterPro" id="IPR014721">
    <property type="entry name" value="Ribsml_uS5_D2-typ_fold_subgr"/>
</dbReference>
<dbReference type="NCBIfam" id="NF001099">
    <property type="entry name" value="PRK00132.1"/>
    <property type="match status" value="1"/>
</dbReference>
<dbReference type="PANTHER" id="PTHR21569">
    <property type="entry name" value="RIBOSOMAL PROTEIN S9"/>
    <property type="match status" value="1"/>
</dbReference>
<dbReference type="PANTHER" id="PTHR21569:SF1">
    <property type="entry name" value="SMALL RIBOSOMAL SUBUNIT PROTEIN US9M"/>
    <property type="match status" value="1"/>
</dbReference>
<dbReference type="Pfam" id="PF00380">
    <property type="entry name" value="Ribosomal_S9"/>
    <property type="match status" value="1"/>
</dbReference>
<dbReference type="SUPFAM" id="SSF54211">
    <property type="entry name" value="Ribosomal protein S5 domain 2-like"/>
    <property type="match status" value="1"/>
</dbReference>
<dbReference type="PROSITE" id="PS00360">
    <property type="entry name" value="RIBOSOMAL_S9"/>
    <property type="match status" value="1"/>
</dbReference>
<evidence type="ECO:0000255" key="1">
    <source>
        <dbReference type="HAMAP-Rule" id="MF_00532"/>
    </source>
</evidence>
<evidence type="ECO:0000305" key="2"/>
<gene>
    <name evidence="1" type="primary">rpsI</name>
    <name type="ordered locus">BruAb1_0804</name>
</gene>
<feature type="chain" id="PRO_1000051178" description="Small ribosomal subunit protein uS9">
    <location>
        <begin position="1"/>
        <end position="158"/>
    </location>
</feature>
<comment type="similarity">
    <text evidence="1">Belongs to the universal ribosomal protein uS9 family.</text>
</comment>
<protein>
    <recommendedName>
        <fullName evidence="1">Small ribosomal subunit protein uS9</fullName>
    </recommendedName>
    <alternativeName>
        <fullName evidence="2">30S ribosomal protein S9</fullName>
    </alternativeName>
</protein>
<reference key="1">
    <citation type="journal article" date="2005" name="J. Bacteriol.">
        <title>Completion of the genome sequence of Brucella abortus and comparison to the highly similar genomes of Brucella melitensis and Brucella suis.</title>
        <authorList>
            <person name="Halling S.M."/>
            <person name="Peterson-Burch B.D."/>
            <person name="Bricker B.J."/>
            <person name="Zuerner R.L."/>
            <person name="Qing Z."/>
            <person name="Li L.-L."/>
            <person name="Kapur V."/>
            <person name="Alt D.P."/>
            <person name="Olsen S.C."/>
        </authorList>
    </citation>
    <scope>NUCLEOTIDE SEQUENCE [LARGE SCALE GENOMIC DNA]</scope>
    <source>
        <strain>9-941</strain>
    </source>
</reference>
<sequence length="158" mass="17173">MAESINSLEELGTVAKTEAAAPVHVQKLDAQGRAYATGKRKDAVARVWVKPGTGKITVNDKEFEKYFARPVLQMILQQPIVASNRAGQFDIVATVAGGGLSGQAGAVRHGISKALTDYEPGLRTVLKKGGFLTRDSRVVERKKYGKAKARRSFQFSKR</sequence>
<organism>
    <name type="scientific">Brucella abortus biovar 1 (strain 9-941)</name>
    <dbReference type="NCBI Taxonomy" id="262698"/>
    <lineage>
        <taxon>Bacteria</taxon>
        <taxon>Pseudomonadati</taxon>
        <taxon>Pseudomonadota</taxon>
        <taxon>Alphaproteobacteria</taxon>
        <taxon>Hyphomicrobiales</taxon>
        <taxon>Brucellaceae</taxon>
        <taxon>Brucella/Ochrobactrum group</taxon>
        <taxon>Brucella</taxon>
    </lineage>
</organism>